<dbReference type="EC" id="2.7.11.1"/>
<dbReference type="EMBL" id="AAFI02000200">
    <property type="protein sequence ID" value="EAL60837.1"/>
    <property type="molecule type" value="Genomic_DNA"/>
</dbReference>
<dbReference type="RefSeq" id="XP_629248.1">
    <property type="nucleotide sequence ID" value="XM_629246.1"/>
</dbReference>
<dbReference type="SMR" id="Q54C18"/>
<dbReference type="STRING" id="44689.Q54C18"/>
<dbReference type="PaxDb" id="44689-DDB0229452"/>
<dbReference type="EnsemblProtists" id="EAL60837">
    <property type="protein sequence ID" value="EAL60837"/>
    <property type="gene ID" value="DDB_G0293276"/>
</dbReference>
<dbReference type="GeneID" id="8629130"/>
<dbReference type="KEGG" id="ddi:DDB_G0293276"/>
<dbReference type="dictyBase" id="DDB_G0293276"/>
<dbReference type="VEuPathDB" id="AmoebaDB:DDB_G0293276"/>
<dbReference type="eggNOG" id="KOG0606">
    <property type="taxonomic scope" value="Eukaryota"/>
</dbReference>
<dbReference type="HOGENOM" id="CLU_528334_0_0_1"/>
<dbReference type="InParanoid" id="Q54C18"/>
<dbReference type="OMA" id="CKLINSF"/>
<dbReference type="PhylomeDB" id="Q54C18"/>
<dbReference type="PRO" id="PR:Q54C18"/>
<dbReference type="Proteomes" id="UP000002195">
    <property type="component" value="Chromosome 6"/>
</dbReference>
<dbReference type="GO" id="GO:0005524">
    <property type="term" value="F:ATP binding"/>
    <property type="evidence" value="ECO:0007669"/>
    <property type="project" value="UniProtKB-KW"/>
</dbReference>
<dbReference type="GO" id="GO:0106310">
    <property type="term" value="F:protein serine kinase activity"/>
    <property type="evidence" value="ECO:0007669"/>
    <property type="project" value="RHEA"/>
</dbReference>
<dbReference type="GO" id="GO:0004674">
    <property type="term" value="F:protein serine/threonine kinase activity"/>
    <property type="evidence" value="ECO:0000318"/>
    <property type="project" value="GO_Central"/>
</dbReference>
<dbReference type="GO" id="GO:0035556">
    <property type="term" value="P:intracellular signal transduction"/>
    <property type="evidence" value="ECO:0000318"/>
    <property type="project" value="GO_Central"/>
</dbReference>
<dbReference type="FunFam" id="1.10.510.10:FF:000757">
    <property type="entry name" value="AGC family serine/threonine kinase"/>
    <property type="match status" value="1"/>
</dbReference>
<dbReference type="Gene3D" id="3.30.200.20">
    <property type="entry name" value="Phosphorylase Kinase, domain 1"/>
    <property type="match status" value="1"/>
</dbReference>
<dbReference type="Gene3D" id="1.10.510.10">
    <property type="entry name" value="Transferase(Phosphotransferase) domain 1"/>
    <property type="match status" value="1"/>
</dbReference>
<dbReference type="InterPro" id="IPR011009">
    <property type="entry name" value="Kinase-like_dom_sf"/>
</dbReference>
<dbReference type="InterPro" id="IPR000719">
    <property type="entry name" value="Prot_kinase_dom"/>
</dbReference>
<dbReference type="InterPro" id="IPR017441">
    <property type="entry name" value="Protein_kinase_ATP_BS"/>
</dbReference>
<dbReference type="InterPro" id="IPR008271">
    <property type="entry name" value="Ser/Thr_kinase_AS"/>
</dbReference>
<dbReference type="InterPro" id="IPR050236">
    <property type="entry name" value="Ser_Thr_kinase_AGC"/>
</dbReference>
<dbReference type="PANTHER" id="PTHR24356">
    <property type="entry name" value="SERINE/THREONINE-PROTEIN KINASE"/>
    <property type="match status" value="1"/>
</dbReference>
<dbReference type="PANTHER" id="PTHR24356:SF135">
    <property type="entry name" value="SERINE_THREONINE-PROTEIN KINASE DDB_G0293276-RELATED"/>
    <property type="match status" value="1"/>
</dbReference>
<dbReference type="Pfam" id="PF00069">
    <property type="entry name" value="Pkinase"/>
    <property type="match status" value="1"/>
</dbReference>
<dbReference type="SMART" id="SM00220">
    <property type="entry name" value="S_TKc"/>
    <property type="match status" value="1"/>
</dbReference>
<dbReference type="SUPFAM" id="SSF56112">
    <property type="entry name" value="Protein kinase-like (PK-like)"/>
    <property type="match status" value="1"/>
</dbReference>
<dbReference type="PROSITE" id="PS00107">
    <property type="entry name" value="PROTEIN_KINASE_ATP"/>
    <property type="match status" value="1"/>
</dbReference>
<dbReference type="PROSITE" id="PS50011">
    <property type="entry name" value="PROTEIN_KINASE_DOM"/>
    <property type="match status" value="1"/>
</dbReference>
<dbReference type="PROSITE" id="PS00108">
    <property type="entry name" value="PROTEIN_KINASE_ST"/>
    <property type="match status" value="1"/>
</dbReference>
<protein>
    <recommendedName>
        <fullName>Probable serine/threonine-protein kinase DDB_G0293276</fullName>
        <ecNumber>2.7.11.1</ecNumber>
    </recommendedName>
</protein>
<accession>Q54C18</accession>
<keyword id="KW-0067">ATP-binding</keyword>
<keyword id="KW-0418">Kinase</keyword>
<keyword id="KW-0547">Nucleotide-binding</keyword>
<keyword id="KW-1185">Reference proteome</keyword>
<keyword id="KW-0723">Serine/threonine-protein kinase</keyword>
<keyword id="KW-0808">Transferase</keyword>
<evidence type="ECO:0000255" key="1">
    <source>
        <dbReference type="PROSITE-ProRule" id="PRU00159"/>
    </source>
</evidence>
<evidence type="ECO:0000255" key="2">
    <source>
        <dbReference type="PROSITE-ProRule" id="PRU10027"/>
    </source>
</evidence>
<evidence type="ECO:0000256" key="3">
    <source>
        <dbReference type="SAM" id="MobiDB-lite"/>
    </source>
</evidence>
<evidence type="ECO:0000305" key="4"/>
<proteinExistence type="inferred from homology"/>
<comment type="catalytic activity">
    <reaction>
        <text>L-seryl-[protein] + ATP = O-phospho-L-seryl-[protein] + ADP + H(+)</text>
        <dbReference type="Rhea" id="RHEA:17989"/>
        <dbReference type="Rhea" id="RHEA-COMP:9863"/>
        <dbReference type="Rhea" id="RHEA-COMP:11604"/>
        <dbReference type="ChEBI" id="CHEBI:15378"/>
        <dbReference type="ChEBI" id="CHEBI:29999"/>
        <dbReference type="ChEBI" id="CHEBI:30616"/>
        <dbReference type="ChEBI" id="CHEBI:83421"/>
        <dbReference type="ChEBI" id="CHEBI:456216"/>
        <dbReference type="EC" id="2.7.11.1"/>
    </reaction>
</comment>
<comment type="catalytic activity">
    <reaction>
        <text>L-threonyl-[protein] + ATP = O-phospho-L-threonyl-[protein] + ADP + H(+)</text>
        <dbReference type="Rhea" id="RHEA:46608"/>
        <dbReference type="Rhea" id="RHEA-COMP:11060"/>
        <dbReference type="Rhea" id="RHEA-COMP:11605"/>
        <dbReference type="ChEBI" id="CHEBI:15378"/>
        <dbReference type="ChEBI" id="CHEBI:30013"/>
        <dbReference type="ChEBI" id="CHEBI:30616"/>
        <dbReference type="ChEBI" id="CHEBI:61977"/>
        <dbReference type="ChEBI" id="CHEBI:456216"/>
        <dbReference type="EC" id="2.7.11.1"/>
    </reaction>
</comment>
<comment type="similarity">
    <text evidence="4">Belongs to the protein kinase superfamily. AGC Ser/Thr protein kinase family.</text>
</comment>
<comment type="caution">
    <text evidence="4">In contrast to other members of the AGC Ser/Thr protein kinase family, lacks the AGC-kinase C-terminal domain at the C-terminus.</text>
</comment>
<sequence length="516" mass="58102">MYIYINNEIEELIECAKKIPILNNNENGNDHNKSISKLITIFKSKQRSRSSSFSLDTLNFNLSSSSSNSIEIDDENPYNTNNNNNSNNNNNNNNNNCNNSNNSNNNKNINSLDNIDINNNNKNNFNDCSSYSSFSSSECLSDIGNSCIDSLELFRLSDDIEEESEMIFNQVGPDRYNDLANIFSKSHKNLTILLKDINRDTLDCSECIDGSLSDNEWEKCLCCGDIHSLGDYKHVECIGKGGYGVVCKFINKKTNEIRAIKTIRKDYSALKEINTLKELGGQFTVNIFHTFLSPCKEKVLIEMEYLSGGDCAFHLNDVGVGFPEELAKQYTAETVLCLDFIHEKSIIHCDIKPNNMVIDSDGHIKLLDFGNAKKFNQKKPTSNDGILGSPRYISPEVLLFEPQSPAVDYWSLGIVMFELITGTTPFIGETPEEIFESILSRNTECIEIQKDAKDLIIKLLDPNPSTRIGSKDIKNHPYFNGINWDTIKTSQPIWKPNSSNNFITSINGCCKLINSF</sequence>
<feature type="chain" id="PRO_0000355016" description="Probable serine/threonine-protein kinase DDB_G0293276">
    <location>
        <begin position="1"/>
        <end position="516"/>
    </location>
</feature>
<feature type="domain" description="Protein kinase" evidence="1">
    <location>
        <begin position="232"/>
        <end position="479"/>
    </location>
</feature>
<feature type="region of interest" description="Disordered" evidence="3">
    <location>
        <begin position="69"/>
        <end position="115"/>
    </location>
</feature>
<feature type="compositionally biased region" description="Low complexity" evidence="3">
    <location>
        <begin position="79"/>
        <end position="115"/>
    </location>
</feature>
<feature type="active site" description="Proton acceptor" evidence="1 2">
    <location>
        <position position="350"/>
    </location>
</feature>
<feature type="binding site" evidence="1">
    <location>
        <begin position="238"/>
        <end position="246"/>
    </location>
    <ligand>
        <name>ATP</name>
        <dbReference type="ChEBI" id="CHEBI:30616"/>
    </ligand>
</feature>
<feature type="binding site" evidence="1">
    <location>
        <position position="261"/>
    </location>
    <ligand>
        <name>ATP</name>
        <dbReference type="ChEBI" id="CHEBI:30616"/>
    </ligand>
</feature>
<organism>
    <name type="scientific">Dictyostelium discoideum</name>
    <name type="common">Social amoeba</name>
    <dbReference type="NCBI Taxonomy" id="44689"/>
    <lineage>
        <taxon>Eukaryota</taxon>
        <taxon>Amoebozoa</taxon>
        <taxon>Evosea</taxon>
        <taxon>Eumycetozoa</taxon>
        <taxon>Dictyostelia</taxon>
        <taxon>Dictyosteliales</taxon>
        <taxon>Dictyosteliaceae</taxon>
        <taxon>Dictyostelium</taxon>
    </lineage>
</organism>
<reference key="1">
    <citation type="journal article" date="2005" name="Nature">
        <title>The genome of the social amoeba Dictyostelium discoideum.</title>
        <authorList>
            <person name="Eichinger L."/>
            <person name="Pachebat J.A."/>
            <person name="Gloeckner G."/>
            <person name="Rajandream M.A."/>
            <person name="Sucgang R."/>
            <person name="Berriman M."/>
            <person name="Song J."/>
            <person name="Olsen R."/>
            <person name="Szafranski K."/>
            <person name="Xu Q."/>
            <person name="Tunggal B."/>
            <person name="Kummerfeld S."/>
            <person name="Madera M."/>
            <person name="Konfortov B.A."/>
            <person name="Rivero F."/>
            <person name="Bankier A.T."/>
            <person name="Lehmann R."/>
            <person name="Hamlin N."/>
            <person name="Davies R."/>
            <person name="Gaudet P."/>
            <person name="Fey P."/>
            <person name="Pilcher K."/>
            <person name="Chen G."/>
            <person name="Saunders D."/>
            <person name="Sodergren E.J."/>
            <person name="Davis P."/>
            <person name="Kerhornou A."/>
            <person name="Nie X."/>
            <person name="Hall N."/>
            <person name="Anjard C."/>
            <person name="Hemphill L."/>
            <person name="Bason N."/>
            <person name="Farbrother P."/>
            <person name="Desany B."/>
            <person name="Just E."/>
            <person name="Morio T."/>
            <person name="Rost R."/>
            <person name="Churcher C.M."/>
            <person name="Cooper J."/>
            <person name="Haydock S."/>
            <person name="van Driessche N."/>
            <person name="Cronin A."/>
            <person name="Goodhead I."/>
            <person name="Muzny D.M."/>
            <person name="Mourier T."/>
            <person name="Pain A."/>
            <person name="Lu M."/>
            <person name="Harper D."/>
            <person name="Lindsay R."/>
            <person name="Hauser H."/>
            <person name="James K.D."/>
            <person name="Quiles M."/>
            <person name="Madan Babu M."/>
            <person name="Saito T."/>
            <person name="Buchrieser C."/>
            <person name="Wardroper A."/>
            <person name="Felder M."/>
            <person name="Thangavelu M."/>
            <person name="Johnson D."/>
            <person name="Knights A."/>
            <person name="Loulseged H."/>
            <person name="Mungall K.L."/>
            <person name="Oliver K."/>
            <person name="Price C."/>
            <person name="Quail M.A."/>
            <person name="Urushihara H."/>
            <person name="Hernandez J."/>
            <person name="Rabbinowitsch E."/>
            <person name="Steffen D."/>
            <person name="Sanders M."/>
            <person name="Ma J."/>
            <person name="Kohara Y."/>
            <person name="Sharp S."/>
            <person name="Simmonds M.N."/>
            <person name="Spiegler S."/>
            <person name="Tivey A."/>
            <person name="Sugano S."/>
            <person name="White B."/>
            <person name="Walker D."/>
            <person name="Woodward J.R."/>
            <person name="Winckler T."/>
            <person name="Tanaka Y."/>
            <person name="Shaulsky G."/>
            <person name="Schleicher M."/>
            <person name="Weinstock G.M."/>
            <person name="Rosenthal A."/>
            <person name="Cox E.C."/>
            <person name="Chisholm R.L."/>
            <person name="Gibbs R.A."/>
            <person name="Loomis W.F."/>
            <person name="Platzer M."/>
            <person name="Kay R.R."/>
            <person name="Williams J.G."/>
            <person name="Dear P.H."/>
            <person name="Noegel A.A."/>
            <person name="Barrell B.G."/>
            <person name="Kuspa A."/>
        </authorList>
    </citation>
    <scope>NUCLEOTIDE SEQUENCE [LARGE SCALE GENOMIC DNA]</scope>
    <source>
        <strain>AX4</strain>
    </source>
</reference>
<name>Y9452_DICDI</name>
<gene>
    <name type="ORF">DDB_G0293276</name>
</gene>